<feature type="chain" id="PRO_1000023589" description="Arginine repressor">
    <location>
        <begin position="1"/>
        <end position="156"/>
    </location>
</feature>
<comment type="function">
    <text evidence="1">Regulates arginine biosynthesis genes.</text>
</comment>
<comment type="pathway">
    <text>Amino-acid biosynthesis; L-arginine biosynthesis [regulation].</text>
</comment>
<comment type="subcellular location">
    <subcellularLocation>
        <location evidence="1">Cytoplasm</location>
    </subcellularLocation>
</comment>
<comment type="similarity">
    <text evidence="1">Belongs to the ArgR family.</text>
</comment>
<proteinExistence type="inferred from homology"/>
<dbReference type="EMBL" id="CP000753">
    <property type="protein sequence ID" value="ABS09811.1"/>
    <property type="molecule type" value="Genomic_DNA"/>
</dbReference>
<dbReference type="RefSeq" id="WP_006080175.1">
    <property type="nucleotide sequence ID" value="NC_009665.1"/>
</dbReference>
<dbReference type="SMR" id="A6WSM2"/>
<dbReference type="GeneID" id="11773825"/>
<dbReference type="KEGG" id="sbm:Shew185_3686"/>
<dbReference type="HOGENOM" id="CLU_097103_2_0_6"/>
<dbReference type="UniPathway" id="UPA00068"/>
<dbReference type="GO" id="GO:0005737">
    <property type="term" value="C:cytoplasm"/>
    <property type="evidence" value="ECO:0007669"/>
    <property type="project" value="UniProtKB-SubCell"/>
</dbReference>
<dbReference type="GO" id="GO:0034618">
    <property type="term" value="F:arginine binding"/>
    <property type="evidence" value="ECO:0007669"/>
    <property type="project" value="InterPro"/>
</dbReference>
<dbReference type="GO" id="GO:0003677">
    <property type="term" value="F:DNA binding"/>
    <property type="evidence" value="ECO:0007669"/>
    <property type="project" value="UniProtKB-KW"/>
</dbReference>
<dbReference type="GO" id="GO:0003700">
    <property type="term" value="F:DNA-binding transcription factor activity"/>
    <property type="evidence" value="ECO:0007669"/>
    <property type="project" value="UniProtKB-UniRule"/>
</dbReference>
<dbReference type="GO" id="GO:0006526">
    <property type="term" value="P:L-arginine biosynthetic process"/>
    <property type="evidence" value="ECO:0007669"/>
    <property type="project" value="UniProtKB-UniPathway"/>
</dbReference>
<dbReference type="GO" id="GO:0051259">
    <property type="term" value="P:protein complex oligomerization"/>
    <property type="evidence" value="ECO:0007669"/>
    <property type="project" value="InterPro"/>
</dbReference>
<dbReference type="GO" id="GO:1900079">
    <property type="term" value="P:regulation of arginine biosynthetic process"/>
    <property type="evidence" value="ECO:0007669"/>
    <property type="project" value="UniProtKB-UniRule"/>
</dbReference>
<dbReference type="Gene3D" id="3.30.1360.40">
    <property type="match status" value="1"/>
</dbReference>
<dbReference type="Gene3D" id="1.10.10.10">
    <property type="entry name" value="Winged helix-like DNA-binding domain superfamily/Winged helix DNA-binding domain"/>
    <property type="match status" value="1"/>
</dbReference>
<dbReference type="HAMAP" id="MF_00173">
    <property type="entry name" value="Arg_repressor"/>
    <property type="match status" value="1"/>
</dbReference>
<dbReference type="InterPro" id="IPR001669">
    <property type="entry name" value="Arg_repress"/>
</dbReference>
<dbReference type="InterPro" id="IPR020899">
    <property type="entry name" value="Arg_repress_C"/>
</dbReference>
<dbReference type="InterPro" id="IPR036251">
    <property type="entry name" value="Arg_repress_C_sf"/>
</dbReference>
<dbReference type="InterPro" id="IPR020900">
    <property type="entry name" value="Arg_repress_DNA-bd"/>
</dbReference>
<dbReference type="InterPro" id="IPR036388">
    <property type="entry name" value="WH-like_DNA-bd_sf"/>
</dbReference>
<dbReference type="InterPro" id="IPR036390">
    <property type="entry name" value="WH_DNA-bd_sf"/>
</dbReference>
<dbReference type="NCBIfam" id="TIGR01529">
    <property type="entry name" value="argR_whole"/>
    <property type="match status" value="1"/>
</dbReference>
<dbReference type="NCBIfam" id="NF003457">
    <property type="entry name" value="PRK05066.1"/>
    <property type="match status" value="1"/>
</dbReference>
<dbReference type="PANTHER" id="PTHR34471">
    <property type="entry name" value="ARGININE REPRESSOR"/>
    <property type="match status" value="1"/>
</dbReference>
<dbReference type="PANTHER" id="PTHR34471:SF1">
    <property type="entry name" value="ARGININE REPRESSOR"/>
    <property type="match status" value="1"/>
</dbReference>
<dbReference type="Pfam" id="PF01316">
    <property type="entry name" value="Arg_repressor"/>
    <property type="match status" value="1"/>
</dbReference>
<dbReference type="Pfam" id="PF02863">
    <property type="entry name" value="Arg_repressor_C"/>
    <property type="match status" value="1"/>
</dbReference>
<dbReference type="PRINTS" id="PR01467">
    <property type="entry name" value="ARGREPRESSOR"/>
</dbReference>
<dbReference type="SUPFAM" id="SSF55252">
    <property type="entry name" value="C-terminal domain of arginine repressor"/>
    <property type="match status" value="1"/>
</dbReference>
<dbReference type="SUPFAM" id="SSF46785">
    <property type="entry name" value="Winged helix' DNA-binding domain"/>
    <property type="match status" value="1"/>
</dbReference>
<keyword id="KW-0028">Amino-acid biosynthesis</keyword>
<keyword id="KW-0055">Arginine biosynthesis</keyword>
<keyword id="KW-0963">Cytoplasm</keyword>
<keyword id="KW-0238">DNA-binding</keyword>
<keyword id="KW-0678">Repressor</keyword>
<keyword id="KW-0804">Transcription</keyword>
<keyword id="KW-0805">Transcription regulation</keyword>
<evidence type="ECO:0000255" key="1">
    <source>
        <dbReference type="HAMAP-Rule" id="MF_00173"/>
    </source>
</evidence>
<protein>
    <recommendedName>
        <fullName evidence="1">Arginine repressor</fullName>
    </recommendedName>
</protein>
<organism>
    <name type="scientific">Shewanella baltica (strain OS185)</name>
    <dbReference type="NCBI Taxonomy" id="402882"/>
    <lineage>
        <taxon>Bacteria</taxon>
        <taxon>Pseudomonadati</taxon>
        <taxon>Pseudomonadota</taxon>
        <taxon>Gammaproteobacteria</taxon>
        <taxon>Alteromonadales</taxon>
        <taxon>Shewanellaceae</taxon>
        <taxon>Shewanella</taxon>
    </lineage>
</organism>
<accession>A6WSM2</accession>
<sequence length="156" mass="16955">MQTTKNQDDLVRIFKSILKEERFGSQSEIVTALQAEGFGNINQSKVSRMLSKFGAVRTRNAKQEMVYCLPAELGVPTAGSPLKNLVLDVDHNQAMIVVRTSPGAAQLIARLLDSIGKPEGILGTIAGDDTIFICPSSIQDIADTLETIKSLFNYAE</sequence>
<reference key="1">
    <citation type="submission" date="2007-07" db="EMBL/GenBank/DDBJ databases">
        <title>Complete sequence of chromosome of Shewanella baltica OS185.</title>
        <authorList>
            <consortium name="US DOE Joint Genome Institute"/>
            <person name="Copeland A."/>
            <person name="Lucas S."/>
            <person name="Lapidus A."/>
            <person name="Barry K."/>
            <person name="Glavina del Rio T."/>
            <person name="Dalin E."/>
            <person name="Tice H."/>
            <person name="Pitluck S."/>
            <person name="Sims D."/>
            <person name="Brettin T."/>
            <person name="Bruce D."/>
            <person name="Detter J.C."/>
            <person name="Han C."/>
            <person name="Schmutz J."/>
            <person name="Larimer F."/>
            <person name="Land M."/>
            <person name="Hauser L."/>
            <person name="Kyrpides N."/>
            <person name="Mikhailova N."/>
            <person name="Brettar I."/>
            <person name="Rodrigues J."/>
            <person name="Konstantinidis K."/>
            <person name="Tiedje J."/>
            <person name="Richardson P."/>
        </authorList>
    </citation>
    <scope>NUCLEOTIDE SEQUENCE [LARGE SCALE GENOMIC DNA]</scope>
    <source>
        <strain>OS185</strain>
    </source>
</reference>
<gene>
    <name evidence="1" type="primary">argR</name>
    <name type="ordered locus">Shew185_3686</name>
</gene>
<name>ARGR_SHEB8</name>